<sequence>MEPIEQQLTELRTTLRHHEYLYHVMDAPEIPDAEYDRLMRELRELEAQRPDLITPDSPTQRVGAAPLTAFNQIRHEVPMLSLDNVFDEESFLAFNKRVQDRLKSTENVIWCCELKLDGLAVSILYENGVLVSAATRGDGTTGEDITSNVRTIRAIPLKLHGDNIPARLEVRGEVFLPQAGFEKINEDARRTGGKVFANPRNAAAGSLRQLDPRITAKRPLTFFCYGVGILEGGELPDTHLGRLLQFKAWGLPVSDRVTLCDSPQAVLDFYRNVEKDRPTLGFDIDGVVIKVNSLVLQEQLGFVARAPRWAVAFKFPAQEQMTFVRDVEFQVGRTGAITPVARLEPVQVAGVLVSNATLHNADEIERLGLRIGDKVVIRRAGDVIPQVVNVVLSERPEETRPIVFPTHCPVCGSDVERVEGEAVTRCTGGLICGAQRKESLKHFVSRRAMDVDGMGDKIIDQLVEREYVHTPADLFRLTAGKLTGLDRMGPKSAQNVVNALEKAKATTFARFLYALGIREVGEATAAGLAAYFGTLEALQTATIDELQKVPDVGIVVATHVFNFFAEESNRDVIGQLLAEGVHWPAPVVINVQEIDSPFAGKTVVLTGSLSQMSRDDAKARLAALGAKVAGSVSKKTDLVIAGEAAGSKLAKAQELGITVIDEAEMIRLLGA</sequence>
<keyword id="KW-0227">DNA damage</keyword>
<keyword id="KW-0234">DNA repair</keyword>
<keyword id="KW-0235">DNA replication</keyword>
<keyword id="KW-0436">Ligase</keyword>
<keyword id="KW-0460">Magnesium</keyword>
<keyword id="KW-0464">Manganese</keyword>
<keyword id="KW-0479">Metal-binding</keyword>
<keyword id="KW-0520">NAD</keyword>
<keyword id="KW-0862">Zinc</keyword>
<feature type="chain" id="PRO_0000380461" description="DNA ligase">
    <location>
        <begin position="1"/>
        <end position="671"/>
    </location>
</feature>
<feature type="domain" description="BRCT" evidence="1">
    <location>
        <begin position="593"/>
        <end position="671"/>
    </location>
</feature>
<feature type="active site" description="N6-AMP-lysine intermediate" evidence="1">
    <location>
        <position position="115"/>
    </location>
</feature>
<feature type="binding site" evidence="1">
    <location>
        <begin position="32"/>
        <end position="36"/>
    </location>
    <ligand>
        <name>NAD(+)</name>
        <dbReference type="ChEBI" id="CHEBI:57540"/>
    </ligand>
</feature>
<feature type="binding site" evidence="1">
    <location>
        <begin position="81"/>
        <end position="82"/>
    </location>
    <ligand>
        <name>NAD(+)</name>
        <dbReference type="ChEBI" id="CHEBI:57540"/>
    </ligand>
</feature>
<feature type="binding site" evidence="1">
    <location>
        <position position="113"/>
    </location>
    <ligand>
        <name>NAD(+)</name>
        <dbReference type="ChEBI" id="CHEBI:57540"/>
    </ligand>
</feature>
<feature type="binding site" evidence="1">
    <location>
        <position position="136"/>
    </location>
    <ligand>
        <name>NAD(+)</name>
        <dbReference type="ChEBI" id="CHEBI:57540"/>
    </ligand>
</feature>
<feature type="binding site" evidence="1">
    <location>
        <position position="173"/>
    </location>
    <ligand>
        <name>NAD(+)</name>
        <dbReference type="ChEBI" id="CHEBI:57540"/>
    </ligand>
</feature>
<feature type="binding site" evidence="1">
    <location>
        <position position="290"/>
    </location>
    <ligand>
        <name>NAD(+)</name>
        <dbReference type="ChEBI" id="CHEBI:57540"/>
    </ligand>
</feature>
<feature type="binding site" evidence="1">
    <location>
        <position position="314"/>
    </location>
    <ligand>
        <name>NAD(+)</name>
        <dbReference type="ChEBI" id="CHEBI:57540"/>
    </ligand>
</feature>
<feature type="binding site" evidence="1">
    <location>
        <position position="408"/>
    </location>
    <ligand>
        <name>Zn(2+)</name>
        <dbReference type="ChEBI" id="CHEBI:29105"/>
    </ligand>
</feature>
<feature type="binding site" evidence="1">
    <location>
        <position position="411"/>
    </location>
    <ligand>
        <name>Zn(2+)</name>
        <dbReference type="ChEBI" id="CHEBI:29105"/>
    </ligand>
</feature>
<feature type="binding site" evidence="1">
    <location>
        <position position="426"/>
    </location>
    <ligand>
        <name>Zn(2+)</name>
        <dbReference type="ChEBI" id="CHEBI:29105"/>
    </ligand>
</feature>
<feature type="binding site" evidence="1">
    <location>
        <position position="432"/>
    </location>
    <ligand>
        <name>Zn(2+)</name>
        <dbReference type="ChEBI" id="CHEBI:29105"/>
    </ligand>
</feature>
<comment type="function">
    <text evidence="1">DNA ligase that catalyzes the formation of phosphodiester linkages between 5'-phosphoryl and 3'-hydroxyl groups in double-stranded DNA using NAD as a coenzyme and as the energy source for the reaction. It is essential for DNA replication and repair of damaged DNA.</text>
</comment>
<comment type="catalytic activity">
    <reaction evidence="1">
        <text>NAD(+) + (deoxyribonucleotide)n-3'-hydroxyl + 5'-phospho-(deoxyribonucleotide)m = (deoxyribonucleotide)n+m + AMP + beta-nicotinamide D-nucleotide.</text>
        <dbReference type="EC" id="6.5.1.2"/>
    </reaction>
</comment>
<comment type="cofactor">
    <cofactor evidence="1">
        <name>Mg(2+)</name>
        <dbReference type="ChEBI" id="CHEBI:18420"/>
    </cofactor>
    <cofactor evidence="1">
        <name>Mn(2+)</name>
        <dbReference type="ChEBI" id="CHEBI:29035"/>
    </cofactor>
</comment>
<comment type="similarity">
    <text evidence="1">Belongs to the NAD-dependent DNA ligase family. LigA subfamily.</text>
</comment>
<accession>B5FQB9</accession>
<protein>
    <recommendedName>
        <fullName evidence="1">DNA ligase</fullName>
        <ecNumber evidence="1">6.5.1.2</ecNumber>
    </recommendedName>
    <alternativeName>
        <fullName evidence="1">Polydeoxyribonucleotide synthase [NAD(+)]</fullName>
    </alternativeName>
</protein>
<reference key="1">
    <citation type="journal article" date="2011" name="J. Bacteriol.">
        <title>Comparative genomics of 28 Salmonella enterica isolates: evidence for CRISPR-mediated adaptive sublineage evolution.</title>
        <authorList>
            <person name="Fricke W.F."/>
            <person name="Mammel M.K."/>
            <person name="McDermott P.F."/>
            <person name="Tartera C."/>
            <person name="White D.G."/>
            <person name="Leclerc J.E."/>
            <person name="Ravel J."/>
            <person name="Cebula T.A."/>
        </authorList>
    </citation>
    <scope>NUCLEOTIDE SEQUENCE [LARGE SCALE GENOMIC DNA]</scope>
    <source>
        <strain>CT_02021853</strain>
    </source>
</reference>
<organism>
    <name type="scientific">Salmonella dublin (strain CT_02021853)</name>
    <dbReference type="NCBI Taxonomy" id="439851"/>
    <lineage>
        <taxon>Bacteria</taxon>
        <taxon>Pseudomonadati</taxon>
        <taxon>Pseudomonadota</taxon>
        <taxon>Gammaproteobacteria</taxon>
        <taxon>Enterobacterales</taxon>
        <taxon>Enterobacteriaceae</taxon>
        <taxon>Salmonella</taxon>
    </lineage>
</organism>
<gene>
    <name evidence="1" type="primary">ligA</name>
    <name type="ordered locus">SeD_A2792</name>
</gene>
<evidence type="ECO:0000255" key="1">
    <source>
        <dbReference type="HAMAP-Rule" id="MF_01588"/>
    </source>
</evidence>
<proteinExistence type="inferred from homology"/>
<name>DNLJ_SALDC</name>
<dbReference type="EC" id="6.5.1.2" evidence="1"/>
<dbReference type="EMBL" id="CP001144">
    <property type="protein sequence ID" value="ACH75487.1"/>
    <property type="molecule type" value="Genomic_DNA"/>
</dbReference>
<dbReference type="RefSeq" id="WP_000433289.1">
    <property type="nucleotide sequence ID" value="NC_011205.1"/>
</dbReference>
<dbReference type="SMR" id="B5FQB9"/>
<dbReference type="KEGG" id="sed:SeD_A2792"/>
<dbReference type="HOGENOM" id="CLU_007764_2_1_6"/>
<dbReference type="Proteomes" id="UP000008322">
    <property type="component" value="Chromosome"/>
</dbReference>
<dbReference type="GO" id="GO:0005829">
    <property type="term" value="C:cytosol"/>
    <property type="evidence" value="ECO:0007669"/>
    <property type="project" value="TreeGrafter"/>
</dbReference>
<dbReference type="GO" id="GO:0003677">
    <property type="term" value="F:DNA binding"/>
    <property type="evidence" value="ECO:0007669"/>
    <property type="project" value="InterPro"/>
</dbReference>
<dbReference type="GO" id="GO:0003911">
    <property type="term" value="F:DNA ligase (NAD+) activity"/>
    <property type="evidence" value="ECO:0007669"/>
    <property type="project" value="UniProtKB-UniRule"/>
</dbReference>
<dbReference type="GO" id="GO:0046872">
    <property type="term" value="F:metal ion binding"/>
    <property type="evidence" value="ECO:0007669"/>
    <property type="project" value="UniProtKB-KW"/>
</dbReference>
<dbReference type="GO" id="GO:0006281">
    <property type="term" value="P:DNA repair"/>
    <property type="evidence" value="ECO:0007669"/>
    <property type="project" value="UniProtKB-KW"/>
</dbReference>
<dbReference type="GO" id="GO:0006260">
    <property type="term" value="P:DNA replication"/>
    <property type="evidence" value="ECO:0007669"/>
    <property type="project" value="UniProtKB-KW"/>
</dbReference>
<dbReference type="CDD" id="cd17748">
    <property type="entry name" value="BRCT_DNA_ligase_like"/>
    <property type="match status" value="1"/>
</dbReference>
<dbReference type="CDD" id="cd00114">
    <property type="entry name" value="LIGANc"/>
    <property type="match status" value="1"/>
</dbReference>
<dbReference type="FunFam" id="1.10.150.20:FF:000006">
    <property type="entry name" value="DNA ligase"/>
    <property type="match status" value="1"/>
</dbReference>
<dbReference type="FunFam" id="1.10.150.20:FF:000007">
    <property type="entry name" value="DNA ligase"/>
    <property type="match status" value="1"/>
</dbReference>
<dbReference type="FunFam" id="1.10.287.610:FF:000002">
    <property type="entry name" value="DNA ligase"/>
    <property type="match status" value="1"/>
</dbReference>
<dbReference type="FunFam" id="2.40.50.140:FF:000012">
    <property type="entry name" value="DNA ligase"/>
    <property type="match status" value="1"/>
</dbReference>
<dbReference type="FunFam" id="3.30.470.30:FF:000001">
    <property type="entry name" value="DNA ligase"/>
    <property type="match status" value="1"/>
</dbReference>
<dbReference type="FunFam" id="3.40.50.10190:FF:000004">
    <property type="entry name" value="DNA ligase"/>
    <property type="match status" value="1"/>
</dbReference>
<dbReference type="FunFam" id="6.20.10.30:FF:000001">
    <property type="entry name" value="DNA ligase"/>
    <property type="match status" value="1"/>
</dbReference>
<dbReference type="Gene3D" id="6.20.10.30">
    <property type="match status" value="1"/>
</dbReference>
<dbReference type="Gene3D" id="1.10.150.20">
    <property type="entry name" value="5' to 3' exonuclease, C-terminal subdomain"/>
    <property type="match status" value="2"/>
</dbReference>
<dbReference type="Gene3D" id="3.40.50.10190">
    <property type="entry name" value="BRCT domain"/>
    <property type="match status" value="1"/>
</dbReference>
<dbReference type="Gene3D" id="3.30.470.30">
    <property type="entry name" value="DNA ligase/mRNA capping enzyme"/>
    <property type="match status" value="1"/>
</dbReference>
<dbReference type="Gene3D" id="1.10.287.610">
    <property type="entry name" value="Helix hairpin bin"/>
    <property type="match status" value="1"/>
</dbReference>
<dbReference type="Gene3D" id="2.40.50.140">
    <property type="entry name" value="Nucleic acid-binding proteins"/>
    <property type="match status" value="1"/>
</dbReference>
<dbReference type="HAMAP" id="MF_01588">
    <property type="entry name" value="DNA_ligase_A"/>
    <property type="match status" value="1"/>
</dbReference>
<dbReference type="InterPro" id="IPR001357">
    <property type="entry name" value="BRCT_dom"/>
</dbReference>
<dbReference type="InterPro" id="IPR036420">
    <property type="entry name" value="BRCT_dom_sf"/>
</dbReference>
<dbReference type="InterPro" id="IPR041663">
    <property type="entry name" value="DisA/LigA_HHH"/>
</dbReference>
<dbReference type="InterPro" id="IPR001679">
    <property type="entry name" value="DNA_ligase"/>
</dbReference>
<dbReference type="InterPro" id="IPR018239">
    <property type="entry name" value="DNA_ligase_AS"/>
</dbReference>
<dbReference type="InterPro" id="IPR033136">
    <property type="entry name" value="DNA_ligase_CS"/>
</dbReference>
<dbReference type="InterPro" id="IPR013839">
    <property type="entry name" value="DNAligase_adenylation"/>
</dbReference>
<dbReference type="InterPro" id="IPR013840">
    <property type="entry name" value="DNAligase_N"/>
</dbReference>
<dbReference type="InterPro" id="IPR003583">
    <property type="entry name" value="Hlx-hairpin-Hlx_DNA-bd_motif"/>
</dbReference>
<dbReference type="InterPro" id="IPR012340">
    <property type="entry name" value="NA-bd_OB-fold"/>
</dbReference>
<dbReference type="InterPro" id="IPR004150">
    <property type="entry name" value="NAD_DNA_ligase_OB"/>
</dbReference>
<dbReference type="InterPro" id="IPR010994">
    <property type="entry name" value="RuvA_2-like"/>
</dbReference>
<dbReference type="InterPro" id="IPR004149">
    <property type="entry name" value="Znf_DNAligase_C4"/>
</dbReference>
<dbReference type="NCBIfam" id="TIGR00575">
    <property type="entry name" value="dnlj"/>
    <property type="match status" value="1"/>
</dbReference>
<dbReference type="NCBIfam" id="NF005932">
    <property type="entry name" value="PRK07956.1"/>
    <property type="match status" value="1"/>
</dbReference>
<dbReference type="PANTHER" id="PTHR23389">
    <property type="entry name" value="CHROMOSOME TRANSMISSION FIDELITY FACTOR 18"/>
    <property type="match status" value="1"/>
</dbReference>
<dbReference type="PANTHER" id="PTHR23389:SF9">
    <property type="entry name" value="DNA LIGASE"/>
    <property type="match status" value="1"/>
</dbReference>
<dbReference type="Pfam" id="PF00533">
    <property type="entry name" value="BRCT"/>
    <property type="match status" value="1"/>
</dbReference>
<dbReference type="Pfam" id="PF01653">
    <property type="entry name" value="DNA_ligase_aden"/>
    <property type="match status" value="1"/>
</dbReference>
<dbReference type="Pfam" id="PF03120">
    <property type="entry name" value="DNA_ligase_OB"/>
    <property type="match status" value="1"/>
</dbReference>
<dbReference type="Pfam" id="PF03119">
    <property type="entry name" value="DNA_ligase_ZBD"/>
    <property type="match status" value="1"/>
</dbReference>
<dbReference type="Pfam" id="PF12826">
    <property type="entry name" value="HHH_2"/>
    <property type="match status" value="1"/>
</dbReference>
<dbReference type="Pfam" id="PF14520">
    <property type="entry name" value="HHH_5"/>
    <property type="match status" value="1"/>
</dbReference>
<dbReference type="Pfam" id="PF22745">
    <property type="entry name" value="Nlig-Ia"/>
    <property type="match status" value="1"/>
</dbReference>
<dbReference type="PIRSF" id="PIRSF001604">
    <property type="entry name" value="LigA"/>
    <property type="match status" value="1"/>
</dbReference>
<dbReference type="SMART" id="SM00292">
    <property type="entry name" value="BRCT"/>
    <property type="match status" value="1"/>
</dbReference>
<dbReference type="SMART" id="SM00278">
    <property type="entry name" value="HhH1"/>
    <property type="match status" value="4"/>
</dbReference>
<dbReference type="SMART" id="SM00532">
    <property type="entry name" value="LIGANc"/>
    <property type="match status" value="1"/>
</dbReference>
<dbReference type="SUPFAM" id="SSF52113">
    <property type="entry name" value="BRCT domain"/>
    <property type="match status" value="1"/>
</dbReference>
<dbReference type="SUPFAM" id="SSF56091">
    <property type="entry name" value="DNA ligase/mRNA capping enzyme, catalytic domain"/>
    <property type="match status" value="1"/>
</dbReference>
<dbReference type="SUPFAM" id="SSF50249">
    <property type="entry name" value="Nucleic acid-binding proteins"/>
    <property type="match status" value="1"/>
</dbReference>
<dbReference type="SUPFAM" id="SSF47781">
    <property type="entry name" value="RuvA domain 2-like"/>
    <property type="match status" value="1"/>
</dbReference>
<dbReference type="PROSITE" id="PS50172">
    <property type="entry name" value="BRCT"/>
    <property type="match status" value="1"/>
</dbReference>
<dbReference type="PROSITE" id="PS01055">
    <property type="entry name" value="DNA_LIGASE_N1"/>
    <property type="match status" value="1"/>
</dbReference>
<dbReference type="PROSITE" id="PS01056">
    <property type="entry name" value="DNA_LIGASE_N2"/>
    <property type="match status" value="1"/>
</dbReference>